<reference key="1">
    <citation type="submission" date="2006-03" db="EMBL/GenBank/DDBJ databases">
        <title>Complete sequence of chromosome of Nitrobacter hamburgensis X14.</title>
        <authorList>
            <consortium name="US DOE Joint Genome Institute"/>
            <person name="Copeland A."/>
            <person name="Lucas S."/>
            <person name="Lapidus A."/>
            <person name="Barry K."/>
            <person name="Detter J.C."/>
            <person name="Glavina del Rio T."/>
            <person name="Hammon N."/>
            <person name="Israni S."/>
            <person name="Dalin E."/>
            <person name="Tice H."/>
            <person name="Pitluck S."/>
            <person name="Chain P."/>
            <person name="Malfatti S."/>
            <person name="Shin M."/>
            <person name="Vergez L."/>
            <person name="Schmutz J."/>
            <person name="Larimer F."/>
            <person name="Land M."/>
            <person name="Hauser L."/>
            <person name="Kyrpides N."/>
            <person name="Ivanova N."/>
            <person name="Ward B."/>
            <person name="Arp D."/>
            <person name="Klotz M."/>
            <person name="Stein L."/>
            <person name="O'Mullan G."/>
            <person name="Starkenburg S."/>
            <person name="Sayavedra L."/>
            <person name="Poret-Peterson A.T."/>
            <person name="Gentry M.E."/>
            <person name="Bruce D."/>
            <person name="Richardson P."/>
        </authorList>
    </citation>
    <scope>NUCLEOTIDE SEQUENCE [LARGE SCALE GENOMIC DNA]</scope>
    <source>
        <strain>DSM 10229 / NCIMB 13809 / X14</strain>
    </source>
</reference>
<feature type="chain" id="PRO_0000264191" description="Transcriptional repressor NrdR">
    <location>
        <begin position="1"/>
        <end position="160"/>
    </location>
</feature>
<feature type="domain" description="ATP-cone" evidence="1">
    <location>
        <begin position="49"/>
        <end position="139"/>
    </location>
</feature>
<feature type="zinc finger region" evidence="1">
    <location>
        <begin position="3"/>
        <end position="34"/>
    </location>
</feature>
<feature type="region of interest" description="Disordered" evidence="2">
    <location>
        <begin position="1"/>
        <end position="20"/>
    </location>
</feature>
<feature type="compositionally biased region" description="Polar residues" evidence="2">
    <location>
        <begin position="1"/>
        <end position="11"/>
    </location>
</feature>
<sequence length="160" mass="18532">MRCPSCNSLDTQVKDSRPTEDSAVIRRRRVCMACNFRFTTFERVQLRELTVIKRNGRRVPFDRDKLVRSLQISLRKRPVEPERVETMVSAIVRELESGGEAEISSEIIGEIVMEHLRSLDDVAYVRFASVYRNFREAKDFEAVLGELSSEDDARPVPLRK</sequence>
<keyword id="KW-0067">ATP-binding</keyword>
<keyword id="KW-0238">DNA-binding</keyword>
<keyword id="KW-0479">Metal-binding</keyword>
<keyword id="KW-0547">Nucleotide-binding</keyword>
<keyword id="KW-1185">Reference proteome</keyword>
<keyword id="KW-0678">Repressor</keyword>
<keyword id="KW-0804">Transcription</keyword>
<keyword id="KW-0805">Transcription regulation</keyword>
<keyword id="KW-0862">Zinc</keyword>
<keyword id="KW-0863">Zinc-finger</keyword>
<name>NRDR_NITHX</name>
<evidence type="ECO:0000255" key="1">
    <source>
        <dbReference type="HAMAP-Rule" id="MF_00440"/>
    </source>
</evidence>
<evidence type="ECO:0000256" key="2">
    <source>
        <dbReference type="SAM" id="MobiDB-lite"/>
    </source>
</evidence>
<comment type="function">
    <text evidence="1">Negatively regulates transcription of bacterial ribonucleotide reductase nrd genes and operons by binding to NrdR-boxes.</text>
</comment>
<comment type="cofactor">
    <cofactor evidence="1">
        <name>Zn(2+)</name>
        <dbReference type="ChEBI" id="CHEBI:29105"/>
    </cofactor>
    <text evidence="1">Binds 1 zinc ion.</text>
</comment>
<comment type="similarity">
    <text evidence="1">Belongs to the NrdR family.</text>
</comment>
<protein>
    <recommendedName>
        <fullName evidence="1">Transcriptional repressor NrdR</fullName>
    </recommendedName>
</protein>
<gene>
    <name evidence="1" type="primary">nrdR</name>
    <name type="ordered locus">Nham_1815</name>
</gene>
<accession>Q1QMB8</accession>
<proteinExistence type="inferred from homology"/>
<organism>
    <name type="scientific">Nitrobacter hamburgensis (strain DSM 10229 / NCIMB 13809 / X14)</name>
    <dbReference type="NCBI Taxonomy" id="323097"/>
    <lineage>
        <taxon>Bacteria</taxon>
        <taxon>Pseudomonadati</taxon>
        <taxon>Pseudomonadota</taxon>
        <taxon>Alphaproteobacteria</taxon>
        <taxon>Hyphomicrobiales</taxon>
        <taxon>Nitrobacteraceae</taxon>
        <taxon>Nitrobacter</taxon>
    </lineage>
</organism>
<dbReference type="EMBL" id="CP000319">
    <property type="protein sequence ID" value="ABE62629.1"/>
    <property type="molecule type" value="Genomic_DNA"/>
</dbReference>
<dbReference type="RefSeq" id="WP_011510311.1">
    <property type="nucleotide sequence ID" value="NC_007964.1"/>
</dbReference>
<dbReference type="SMR" id="Q1QMB8"/>
<dbReference type="STRING" id="323097.Nham_1815"/>
<dbReference type="KEGG" id="nha:Nham_1815"/>
<dbReference type="eggNOG" id="COG1327">
    <property type="taxonomic scope" value="Bacteria"/>
</dbReference>
<dbReference type="HOGENOM" id="CLU_108412_0_1_5"/>
<dbReference type="OrthoDB" id="9807461at2"/>
<dbReference type="Proteomes" id="UP000001953">
    <property type="component" value="Chromosome"/>
</dbReference>
<dbReference type="GO" id="GO:0005524">
    <property type="term" value="F:ATP binding"/>
    <property type="evidence" value="ECO:0007669"/>
    <property type="project" value="UniProtKB-KW"/>
</dbReference>
<dbReference type="GO" id="GO:0003677">
    <property type="term" value="F:DNA binding"/>
    <property type="evidence" value="ECO:0007669"/>
    <property type="project" value="UniProtKB-KW"/>
</dbReference>
<dbReference type="GO" id="GO:0008270">
    <property type="term" value="F:zinc ion binding"/>
    <property type="evidence" value="ECO:0007669"/>
    <property type="project" value="UniProtKB-UniRule"/>
</dbReference>
<dbReference type="GO" id="GO:0045892">
    <property type="term" value="P:negative regulation of DNA-templated transcription"/>
    <property type="evidence" value="ECO:0007669"/>
    <property type="project" value="UniProtKB-UniRule"/>
</dbReference>
<dbReference type="HAMAP" id="MF_00440">
    <property type="entry name" value="NrdR"/>
    <property type="match status" value="1"/>
</dbReference>
<dbReference type="InterPro" id="IPR005144">
    <property type="entry name" value="ATP-cone_dom"/>
</dbReference>
<dbReference type="InterPro" id="IPR055173">
    <property type="entry name" value="NrdR-like_N"/>
</dbReference>
<dbReference type="InterPro" id="IPR003796">
    <property type="entry name" value="RNR_NrdR-like"/>
</dbReference>
<dbReference type="NCBIfam" id="TIGR00244">
    <property type="entry name" value="transcriptional regulator NrdR"/>
    <property type="match status" value="1"/>
</dbReference>
<dbReference type="PANTHER" id="PTHR30455">
    <property type="entry name" value="TRANSCRIPTIONAL REPRESSOR NRDR"/>
    <property type="match status" value="1"/>
</dbReference>
<dbReference type="PANTHER" id="PTHR30455:SF2">
    <property type="entry name" value="TRANSCRIPTIONAL REPRESSOR NRDR"/>
    <property type="match status" value="1"/>
</dbReference>
<dbReference type="Pfam" id="PF03477">
    <property type="entry name" value="ATP-cone"/>
    <property type="match status" value="1"/>
</dbReference>
<dbReference type="Pfam" id="PF22811">
    <property type="entry name" value="Zn_ribbon_NrdR"/>
    <property type="match status" value="1"/>
</dbReference>
<dbReference type="PROSITE" id="PS51161">
    <property type="entry name" value="ATP_CONE"/>
    <property type="match status" value="1"/>
</dbReference>